<dbReference type="EC" id="5.4.2.7" evidence="1"/>
<dbReference type="EMBL" id="CP000312">
    <property type="protein sequence ID" value="ABG87402.1"/>
    <property type="molecule type" value="Genomic_DNA"/>
</dbReference>
<dbReference type="RefSeq" id="WP_003455388.1">
    <property type="nucleotide sequence ID" value="NC_008262.1"/>
</dbReference>
<dbReference type="SMR" id="Q0SW00"/>
<dbReference type="GeneID" id="93003277"/>
<dbReference type="KEGG" id="cpr:CPR_0371"/>
<dbReference type="UniPathway" id="UPA00002">
    <property type="reaction ID" value="UER00467"/>
</dbReference>
<dbReference type="Proteomes" id="UP000001824">
    <property type="component" value="Chromosome"/>
</dbReference>
<dbReference type="GO" id="GO:0005829">
    <property type="term" value="C:cytosol"/>
    <property type="evidence" value="ECO:0007669"/>
    <property type="project" value="TreeGrafter"/>
</dbReference>
<dbReference type="GO" id="GO:0000287">
    <property type="term" value="F:magnesium ion binding"/>
    <property type="evidence" value="ECO:0007669"/>
    <property type="project" value="InterPro"/>
</dbReference>
<dbReference type="GO" id="GO:0030145">
    <property type="term" value="F:manganese ion binding"/>
    <property type="evidence" value="ECO:0007669"/>
    <property type="project" value="UniProtKB-UniRule"/>
</dbReference>
<dbReference type="GO" id="GO:0008973">
    <property type="term" value="F:phosphopentomutase activity"/>
    <property type="evidence" value="ECO:0007669"/>
    <property type="project" value="UniProtKB-UniRule"/>
</dbReference>
<dbReference type="GO" id="GO:0006018">
    <property type="term" value="P:2-deoxyribose 1-phosphate catabolic process"/>
    <property type="evidence" value="ECO:0007669"/>
    <property type="project" value="UniProtKB-UniRule"/>
</dbReference>
<dbReference type="GO" id="GO:0006015">
    <property type="term" value="P:5-phosphoribose 1-diphosphate biosynthetic process"/>
    <property type="evidence" value="ECO:0007669"/>
    <property type="project" value="UniProtKB-UniPathway"/>
</dbReference>
<dbReference type="GO" id="GO:0043094">
    <property type="term" value="P:metabolic compound salvage"/>
    <property type="evidence" value="ECO:0007669"/>
    <property type="project" value="InterPro"/>
</dbReference>
<dbReference type="GO" id="GO:0009117">
    <property type="term" value="P:nucleotide metabolic process"/>
    <property type="evidence" value="ECO:0007669"/>
    <property type="project" value="InterPro"/>
</dbReference>
<dbReference type="CDD" id="cd16009">
    <property type="entry name" value="PPM"/>
    <property type="match status" value="1"/>
</dbReference>
<dbReference type="FunFam" id="3.30.70.1250:FF:000001">
    <property type="entry name" value="Phosphopentomutase"/>
    <property type="match status" value="1"/>
</dbReference>
<dbReference type="Gene3D" id="3.40.720.10">
    <property type="entry name" value="Alkaline Phosphatase, subunit A"/>
    <property type="match status" value="1"/>
</dbReference>
<dbReference type="Gene3D" id="3.30.70.1250">
    <property type="entry name" value="Phosphopentomutase"/>
    <property type="match status" value="1"/>
</dbReference>
<dbReference type="HAMAP" id="MF_00740">
    <property type="entry name" value="Phosphopentomut"/>
    <property type="match status" value="1"/>
</dbReference>
<dbReference type="InterPro" id="IPR017850">
    <property type="entry name" value="Alkaline_phosphatase_core_sf"/>
</dbReference>
<dbReference type="InterPro" id="IPR010045">
    <property type="entry name" value="DeoB"/>
</dbReference>
<dbReference type="InterPro" id="IPR006124">
    <property type="entry name" value="Metalloenzyme"/>
</dbReference>
<dbReference type="InterPro" id="IPR024052">
    <property type="entry name" value="Phosphopentomutase_DeoB_cap_sf"/>
</dbReference>
<dbReference type="NCBIfam" id="TIGR01696">
    <property type="entry name" value="deoB"/>
    <property type="match status" value="1"/>
</dbReference>
<dbReference type="NCBIfam" id="NF003766">
    <property type="entry name" value="PRK05362.1"/>
    <property type="match status" value="1"/>
</dbReference>
<dbReference type="PANTHER" id="PTHR21110">
    <property type="entry name" value="PHOSPHOPENTOMUTASE"/>
    <property type="match status" value="1"/>
</dbReference>
<dbReference type="PANTHER" id="PTHR21110:SF0">
    <property type="entry name" value="PHOSPHOPENTOMUTASE"/>
    <property type="match status" value="1"/>
</dbReference>
<dbReference type="Pfam" id="PF01676">
    <property type="entry name" value="Metalloenzyme"/>
    <property type="match status" value="1"/>
</dbReference>
<dbReference type="PIRSF" id="PIRSF001491">
    <property type="entry name" value="Ppentomutase"/>
    <property type="match status" value="1"/>
</dbReference>
<dbReference type="SUPFAM" id="SSF53649">
    <property type="entry name" value="Alkaline phosphatase-like"/>
    <property type="match status" value="1"/>
</dbReference>
<dbReference type="SUPFAM" id="SSF143856">
    <property type="entry name" value="DeoB insert domain-like"/>
    <property type="match status" value="1"/>
</dbReference>
<keyword id="KW-0963">Cytoplasm</keyword>
<keyword id="KW-0413">Isomerase</keyword>
<keyword id="KW-0464">Manganese</keyword>
<keyword id="KW-0479">Metal-binding</keyword>
<reference key="1">
    <citation type="journal article" date="2006" name="Genome Res.">
        <title>Skewed genomic variability in strains of the toxigenic bacterial pathogen, Clostridium perfringens.</title>
        <authorList>
            <person name="Myers G.S.A."/>
            <person name="Rasko D.A."/>
            <person name="Cheung J.K."/>
            <person name="Ravel J."/>
            <person name="Seshadri R."/>
            <person name="DeBoy R.T."/>
            <person name="Ren Q."/>
            <person name="Varga J."/>
            <person name="Awad M.M."/>
            <person name="Brinkac L.M."/>
            <person name="Daugherty S.C."/>
            <person name="Haft D.H."/>
            <person name="Dodson R.J."/>
            <person name="Madupu R."/>
            <person name="Nelson W.C."/>
            <person name="Rosovitz M.J."/>
            <person name="Sullivan S.A."/>
            <person name="Khouri H."/>
            <person name="Dimitrov G.I."/>
            <person name="Watkins K.L."/>
            <person name="Mulligan S."/>
            <person name="Benton J."/>
            <person name="Radune D."/>
            <person name="Fisher D.J."/>
            <person name="Atkins H.S."/>
            <person name="Hiscox T."/>
            <person name="Jost B.H."/>
            <person name="Billington S.J."/>
            <person name="Songer J.G."/>
            <person name="McClane B.A."/>
            <person name="Titball R.W."/>
            <person name="Rood J.I."/>
            <person name="Melville S.B."/>
            <person name="Paulsen I.T."/>
        </authorList>
    </citation>
    <scope>NUCLEOTIDE SEQUENCE [LARGE SCALE GENOMIC DNA]</scope>
    <source>
        <strain>SM101 / Type A</strain>
    </source>
</reference>
<protein>
    <recommendedName>
        <fullName evidence="1">Phosphopentomutase</fullName>
        <ecNumber evidence="1">5.4.2.7</ecNumber>
    </recommendedName>
    <alternativeName>
        <fullName evidence="1">Phosphodeoxyribomutase</fullName>
    </alternativeName>
</protein>
<evidence type="ECO:0000255" key="1">
    <source>
        <dbReference type="HAMAP-Rule" id="MF_00740"/>
    </source>
</evidence>
<name>DEOB_CLOPS</name>
<feature type="chain" id="PRO_0000258280" description="Phosphopentomutase">
    <location>
        <begin position="1"/>
        <end position="396"/>
    </location>
</feature>
<feature type="binding site" evidence="1">
    <location>
        <position position="13"/>
    </location>
    <ligand>
        <name>Mn(2+)</name>
        <dbReference type="ChEBI" id="CHEBI:29035"/>
        <label>1</label>
    </ligand>
</feature>
<feature type="binding site" evidence="1">
    <location>
        <position position="288"/>
    </location>
    <ligand>
        <name>Mn(2+)</name>
        <dbReference type="ChEBI" id="CHEBI:29035"/>
        <label>2</label>
    </ligand>
</feature>
<feature type="binding site" evidence="1">
    <location>
        <position position="293"/>
    </location>
    <ligand>
        <name>Mn(2+)</name>
        <dbReference type="ChEBI" id="CHEBI:29035"/>
        <label>2</label>
    </ligand>
</feature>
<feature type="binding site" evidence="1">
    <location>
        <position position="329"/>
    </location>
    <ligand>
        <name>Mn(2+)</name>
        <dbReference type="ChEBI" id="CHEBI:29035"/>
        <label>1</label>
    </ligand>
</feature>
<feature type="binding site" evidence="1">
    <location>
        <position position="330"/>
    </location>
    <ligand>
        <name>Mn(2+)</name>
        <dbReference type="ChEBI" id="CHEBI:29035"/>
        <label>1</label>
    </ligand>
</feature>
<feature type="binding site" evidence="1">
    <location>
        <position position="341"/>
    </location>
    <ligand>
        <name>Mn(2+)</name>
        <dbReference type="ChEBI" id="CHEBI:29035"/>
        <label>2</label>
    </ligand>
</feature>
<comment type="function">
    <text evidence="1">Isomerase that catalyzes the conversion of deoxy-ribose 1-phosphate (dRib-1-P) and ribose 1-phosphate (Rib-1-P) to deoxy-ribose 5-phosphate (dRib-5-P) and ribose 5-phosphate (Rib-5-P), respectively.</text>
</comment>
<comment type="catalytic activity">
    <reaction evidence="1">
        <text>2-deoxy-alpha-D-ribose 1-phosphate = 2-deoxy-D-ribose 5-phosphate</text>
        <dbReference type="Rhea" id="RHEA:27658"/>
        <dbReference type="ChEBI" id="CHEBI:57259"/>
        <dbReference type="ChEBI" id="CHEBI:62877"/>
        <dbReference type="EC" id="5.4.2.7"/>
    </reaction>
</comment>
<comment type="catalytic activity">
    <reaction evidence="1">
        <text>alpha-D-ribose 1-phosphate = D-ribose 5-phosphate</text>
        <dbReference type="Rhea" id="RHEA:18793"/>
        <dbReference type="ChEBI" id="CHEBI:57720"/>
        <dbReference type="ChEBI" id="CHEBI:78346"/>
        <dbReference type="EC" id="5.4.2.7"/>
    </reaction>
</comment>
<comment type="cofactor">
    <cofactor evidence="1">
        <name>Mn(2+)</name>
        <dbReference type="ChEBI" id="CHEBI:29035"/>
    </cofactor>
    <text evidence="1">Binds 2 manganese ions.</text>
</comment>
<comment type="pathway">
    <text evidence="1">Carbohydrate degradation; 2-deoxy-D-ribose 1-phosphate degradation; D-glyceraldehyde 3-phosphate and acetaldehyde from 2-deoxy-alpha-D-ribose 1-phosphate: step 1/2.</text>
</comment>
<comment type="subcellular location">
    <subcellularLocation>
        <location evidence="1">Cytoplasm</location>
    </subcellularLocation>
</comment>
<comment type="similarity">
    <text evidence="1">Belongs to the phosphopentomutase family.</text>
</comment>
<organism>
    <name type="scientific">Clostridium perfringens (strain SM101 / Type A)</name>
    <dbReference type="NCBI Taxonomy" id="289380"/>
    <lineage>
        <taxon>Bacteria</taxon>
        <taxon>Bacillati</taxon>
        <taxon>Bacillota</taxon>
        <taxon>Clostridia</taxon>
        <taxon>Eubacteriales</taxon>
        <taxon>Clostridiaceae</taxon>
        <taxon>Clostridium</taxon>
    </lineage>
</organism>
<accession>Q0SW00</accession>
<sequence>MSKYKRIFTIVIDSLGIGAMNDSEKYGDVNVDTLGHIAESVDTFNIPNLQKMGIANLHPIKHVAPVENPIGYQAKMAEASVGKDTMTGHWEMMGLHITKPFKTFTDTGFPQELLDELTARTGHKIVGNKSASGTEILDELGEHQIATGDMIVYTSADSVLQICGQEETFGLEELYRCCEIARELTLKDEWKVGRIIARPYLGTKKGEFKRTSNRHDYALKPYGRTVLNELKDNNFDVISVGKIKDIFDGEGITEGNKSKSSVHGMEQTLEIMDRDFTGFCFINLVDFDALWGHRRNPQGYAEELEKFDVNLGKVLEKLHEDDLLIITADHGNDPTYTGTDHTREYVPFLAYSPSMKGHGQLETPKTFATIGATIADNFGLKMPEGTIGESVLNKLV</sequence>
<proteinExistence type="inferred from homology"/>
<gene>
    <name evidence="1" type="primary">deoB</name>
    <name type="ordered locus">CPR_0371</name>
</gene>